<accession>P02517</accession>
<accession>Q9VSX3</accession>
<name>HSP26_DROME</name>
<dbReference type="EMBL" id="J01099">
    <property type="protein sequence ID" value="AAA28636.1"/>
    <property type="molecule type" value="Genomic_DNA"/>
</dbReference>
<dbReference type="EMBL" id="X03890">
    <property type="protein sequence ID" value="CAA27526.1"/>
    <property type="molecule type" value="Genomic_DNA"/>
</dbReference>
<dbReference type="EMBL" id="AE014296">
    <property type="protein sequence ID" value="AAF50288.1"/>
    <property type="molecule type" value="Genomic_DNA"/>
</dbReference>
<dbReference type="EMBL" id="AY069419">
    <property type="protein sequence ID" value="AAL39564.1"/>
    <property type="molecule type" value="mRNA"/>
</dbReference>
<dbReference type="PIR" id="A02920">
    <property type="entry name" value="HHFF26"/>
</dbReference>
<dbReference type="PIR" id="C20647">
    <property type="entry name" value="C20647"/>
</dbReference>
<dbReference type="RefSeq" id="NP_001287000.1">
    <property type="nucleotide sequence ID" value="NM_001300071.1"/>
</dbReference>
<dbReference type="RefSeq" id="NP_523997.1">
    <property type="nucleotide sequence ID" value="NM_079273.3"/>
</dbReference>
<dbReference type="SMR" id="P02517"/>
<dbReference type="BioGRID" id="64470">
    <property type="interactions" value="69"/>
</dbReference>
<dbReference type="DIP" id="DIP-18379N"/>
<dbReference type="FunCoup" id="P02517">
    <property type="interactions" value="68"/>
</dbReference>
<dbReference type="IntAct" id="P02517">
    <property type="interactions" value="45"/>
</dbReference>
<dbReference type="MINT" id="P02517"/>
<dbReference type="STRING" id="7227.FBpp0312157"/>
<dbReference type="iPTMnet" id="P02517"/>
<dbReference type="PaxDb" id="7227-FBpp0076224"/>
<dbReference type="DNASU" id="39075"/>
<dbReference type="EnsemblMetazoa" id="FBtr0076496">
    <property type="protein sequence ID" value="FBpp0076224"/>
    <property type="gene ID" value="FBgn0001225"/>
</dbReference>
<dbReference type="EnsemblMetazoa" id="FBtr0346539">
    <property type="protein sequence ID" value="FBpp0312157"/>
    <property type="gene ID" value="FBgn0001225"/>
</dbReference>
<dbReference type="GeneID" id="39075"/>
<dbReference type="KEGG" id="dme:Dmel_CG4183"/>
<dbReference type="AGR" id="FB:FBgn0001225"/>
<dbReference type="CTD" id="39075"/>
<dbReference type="FlyBase" id="FBgn0001225">
    <property type="gene designation" value="Hsp26"/>
</dbReference>
<dbReference type="VEuPathDB" id="VectorBase:FBgn0001225"/>
<dbReference type="eggNOG" id="KOG3591">
    <property type="taxonomic scope" value="Eukaryota"/>
</dbReference>
<dbReference type="HOGENOM" id="CLU_095001_1_1_1"/>
<dbReference type="InParanoid" id="P02517"/>
<dbReference type="OMA" id="SPWQCPH"/>
<dbReference type="OrthoDB" id="1431247at2759"/>
<dbReference type="PhylomeDB" id="P02517"/>
<dbReference type="Reactome" id="R-DME-4420097">
    <property type="pathway name" value="VEGFA-VEGFR2 Pathway"/>
</dbReference>
<dbReference type="Reactome" id="R-DME-9009391">
    <property type="pathway name" value="Extra-nuclear estrogen signaling"/>
</dbReference>
<dbReference type="SignaLink" id="P02517"/>
<dbReference type="BioGRID-ORCS" id="39075">
    <property type="hits" value="0 hits in 3 CRISPR screens"/>
</dbReference>
<dbReference type="ChiTaRS" id="Hsp26">
    <property type="organism name" value="fly"/>
</dbReference>
<dbReference type="GenomeRNAi" id="39075"/>
<dbReference type="PRO" id="PR:P02517"/>
<dbReference type="Proteomes" id="UP000000803">
    <property type="component" value="Chromosome 3L"/>
</dbReference>
<dbReference type="Bgee" id="FBgn0001225">
    <property type="expression patterns" value="Expressed in adult anterior midgut class I enteroendocrine cell in adult midgut (Drosophila) and 298 other cell types or tissues"/>
</dbReference>
<dbReference type="ExpressionAtlas" id="P02517">
    <property type="expression patterns" value="baseline and differential"/>
</dbReference>
<dbReference type="GO" id="GO:0005737">
    <property type="term" value="C:cytoplasm"/>
    <property type="evidence" value="ECO:0007005"/>
    <property type="project" value="FlyBase"/>
</dbReference>
<dbReference type="GO" id="GO:0005829">
    <property type="term" value="C:cytosol"/>
    <property type="evidence" value="ECO:0000314"/>
    <property type="project" value="FlyBase"/>
</dbReference>
<dbReference type="GO" id="GO:0005634">
    <property type="term" value="C:nucleus"/>
    <property type="evidence" value="ECO:0000318"/>
    <property type="project" value="GO_Central"/>
</dbReference>
<dbReference type="GO" id="GO:0017022">
    <property type="term" value="F:myosin binding"/>
    <property type="evidence" value="ECO:0000353"/>
    <property type="project" value="FlyBase"/>
</dbReference>
<dbReference type="GO" id="GO:0051082">
    <property type="term" value="F:unfolded protein binding"/>
    <property type="evidence" value="ECO:0000314"/>
    <property type="project" value="FlyBase"/>
</dbReference>
<dbReference type="GO" id="GO:0061077">
    <property type="term" value="P:chaperone-mediated protein folding"/>
    <property type="evidence" value="ECO:0000314"/>
    <property type="project" value="FlyBase"/>
</dbReference>
<dbReference type="GO" id="GO:0009631">
    <property type="term" value="P:cold acclimation"/>
    <property type="evidence" value="ECO:0000270"/>
    <property type="project" value="FlyBase"/>
</dbReference>
<dbReference type="GO" id="GO:0008340">
    <property type="term" value="P:determination of adult lifespan"/>
    <property type="evidence" value="ECO:0000315"/>
    <property type="project" value="FlyBase"/>
</dbReference>
<dbReference type="GO" id="GO:0042026">
    <property type="term" value="P:protein refolding"/>
    <property type="evidence" value="ECO:0000314"/>
    <property type="project" value="FlyBase"/>
</dbReference>
<dbReference type="GO" id="GO:0009408">
    <property type="term" value="P:response to heat"/>
    <property type="evidence" value="ECO:0000314"/>
    <property type="project" value="FlyBase"/>
</dbReference>
<dbReference type="CDD" id="cd06526">
    <property type="entry name" value="metazoan_ACD"/>
    <property type="match status" value="1"/>
</dbReference>
<dbReference type="FunFam" id="2.60.40.790:FF:000042">
    <property type="entry name" value="heat shock protein 27"/>
    <property type="match status" value="1"/>
</dbReference>
<dbReference type="Gene3D" id="2.60.40.790">
    <property type="match status" value="1"/>
</dbReference>
<dbReference type="InterPro" id="IPR002068">
    <property type="entry name" value="A-crystallin/Hsp20_dom"/>
</dbReference>
<dbReference type="InterPro" id="IPR001436">
    <property type="entry name" value="Alpha-crystallin/sHSP_animal"/>
</dbReference>
<dbReference type="InterPro" id="IPR008978">
    <property type="entry name" value="HSP20-like_chaperone"/>
</dbReference>
<dbReference type="PANTHER" id="PTHR45640:SF13">
    <property type="entry name" value="HEAT SHOCK PROTEIN 22-RELATED"/>
    <property type="match status" value="1"/>
</dbReference>
<dbReference type="PANTHER" id="PTHR45640">
    <property type="entry name" value="HEAT SHOCK PROTEIN HSP-12.2-RELATED"/>
    <property type="match status" value="1"/>
</dbReference>
<dbReference type="Pfam" id="PF00011">
    <property type="entry name" value="HSP20"/>
    <property type="match status" value="1"/>
</dbReference>
<dbReference type="PRINTS" id="PR00299">
    <property type="entry name" value="ACRYSTALLIN"/>
</dbReference>
<dbReference type="SUPFAM" id="SSF49764">
    <property type="entry name" value="HSP20-like chaperones"/>
    <property type="match status" value="1"/>
</dbReference>
<dbReference type="PROSITE" id="PS01031">
    <property type="entry name" value="SHSP"/>
    <property type="match status" value="1"/>
</dbReference>
<keyword id="KW-0597">Phosphoprotein</keyword>
<keyword id="KW-1185">Reference proteome</keyword>
<keyword id="KW-0346">Stress response</keyword>
<proteinExistence type="evidence at protein level"/>
<organism>
    <name type="scientific">Drosophila melanogaster</name>
    <name type="common">Fruit fly</name>
    <dbReference type="NCBI Taxonomy" id="7227"/>
    <lineage>
        <taxon>Eukaryota</taxon>
        <taxon>Metazoa</taxon>
        <taxon>Ecdysozoa</taxon>
        <taxon>Arthropoda</taxon>
        <taxon>Hexapoda</taxon>
        <taxon>Insecta</taxon>
        <taxon>Pterygota</taxon>
        <taxon>Neoptera</taxon>
        <taxon>Endopterygota</taxon>
        <taxon>Diptera</taxon>
        <taxon>Brachycera</taxon>
        <taxon>Muscomorpha</taxon>
        <taxon>Ephydroidea</taxon>
        <taxon>Drosophilidae</taxon>
        <taxon>Drosophila</taxon>
        <taxon>Sophophora</taxon>
    </lineage>
</organism>
<protein>
    <recommendedName>
        <fullName>Heat shock protein 26</fullName>
    </recommendedName>
</protein>
<gene>
    <name type="primary">Hsp26</name>
    <name type="ORF">CG4183</name>
</gene>
<feature type="chain" id="PRO_0000125965" description="Heat shock protein 26">
    <location>
        <begin position="1"/>
        <end position="208"/>
    </location>
</feature>
<feature type="domain" description="sHSP" evidence="1">
    <location>
        <begin position="71"/>
        <end position="179"/>
    </location>
</feature>
<feature type="region of interest" description="Disordered" evidence="2">
    <location>
        <begin position="187"/>
        <end position="208"/>
    </location>
</feature>
<feature type="compositionally biased region" description="Basic and acidic residues" evidence="2">
    <location>
        <begin position="191"/>
        <end position="208"/>
    </location>
</feature>
<feature type="modified residue" description="Phosphoserine" evidence="3">
    <location>
        <position position="44"/>
    </location>
</feature>
<feature type="modified residue" description="Phosphoserine" evidence="3">
    <location>
        <position position="52"/>
    </location>
</feature>
<feature type="modified residue" description="Phosphoserine" evidence="3">
    <location>
        <position position="58"/>
    </location>
</feature>
<feature type="sequence conflict" description="In Ref. 2." evidence="4" ref="2">
    <original>L</original>
    <variation>LL</variation>
    <location>
        <position position="35"/>
    </location>
</feature>
<feature type="sequence conflict" description="In Ref. 2." evidence="4" ref="2">
    <original>E</original>
    <variation>D</variation>
    <location>
        <position position="192"/>
    </location>
</feature>
<comment type="interaction">
    <interactant intactId="EBI-100746">
        <id>P02517</id>
    </interactant>
    <interactant intactId="EBI-110473">
        <id>P02516</id>
        <label>Hsp23</label>
    </interactant>
    <organismsDiffer>false</organismsDiffer>
    <experiments>3</experiments>
</comment>
<comment type="similarity">
    <text evidence="1">Belongs to the small heat shock protein (HSP20) family.</text>
</comment>
<evidence type="ECO:0000255" key="1">
    <source>
        <dbReference type="PROSITE-ProRule" id="PRU00285"/>
    </source>
</evidence>
<evidence type="ECO:0000256" key="2">
    <source>
        <dbReference type="SAM" id="MobiDB-lite"/>
    </source>
</evidence>
<evidence type="ECO:0000269" key="3">
    <source>
    </source>
</evidence>
<evidence type="ECO:0000305" key="4"/>
<reference key="1">
    <citation type="journal article" date="1983" name="J. Mol. Biol.">
        <title>Nucleotide sequence analysis of the Drosophila small heat shock gene cluster at locus 67B.</title>
        <authorList>
            <person name="Southgate R."/>
            <person name="Ayme A."/>
            <person name="Voellmy R."/>
        </authorList>
    </citation>
    <scope>NUCLEOTIDE SEQUENCE [GENOMIC DNA]</scope>
</reference>
<reference key="2">
    <citation type="journal article" date="1982" name="Proc. Natl. Acad. Sci. U.S.A.">
        <title>Four small Drosophila heat shock proteins are related to each other and to mammalian alpha-crystallin.</title>
        <authorList>
            <person name="Ingolia T.D."/>
            <person name="Craig E.A."/>
        </authorList>
    </citation>
    <scope>NUCLEOTIDE SEQUENCE [GENOMIC DNA]</scope>
</reference>
<reference key="3">
    <citation type="journal article" date="2000" name="Science">
        <title>The genome sequence of Drosophila melanogaster.</title>
        <authorList>
            <person name="Adams M.D."/>
            <person name="Celniker S.E."/>
            <person name="Holt R.A."/>
            <person name="Evans C.A."/>
            <person name="Gocayne J.D."/>
            <person name="Amanatides P.G."/>
            <person name="Scherer S.E."/>
            <person name="Li P.W."/>
            <person name="Hoskins R.A."/>
            <person name="Galle R.F."/>
            <person name="George R.A."/>
            <person name="Lewis S.E."/>
            <person name="Richards S."/>
            <person name="Ashburner M."/>
            <person name="Henderson S.N."/>
            <person name="Sutton G.G."/>
            <person name="Wortman J.R."/>
            <person name="Yandell M.D."/>
            <person name="Zhang Q."/>
            <person name="Chen L.X."/>
            <person name="Brandon R.C."/>
            <person name="Rogers Y.-H.C."/>
            <person name="Blazej R.G."/>
            <person name="Champe M."/>
            <person name="Pfeiffer B.D."/>
            <person name="Wan K.H."/>
            <person name="Doyle C."/>
            <person name="Baxter E.G."/>
            <person name="Helt G."/>
            <person name="Nelson C.R."/>
            <person name="Miklos G.L.G."/>
            <person name="Abril J.F."/>
            <person name="Agbayani A."/>
            <person name="An H.-J."/>
            <person name="Andrews-Pfannkoch C."/>
            <person name="Baldwin D."/>
            <person name="Ballew R.M."/>
            <person name="Basu A."/>
            <person name="Baxendale J."/>
            <person name="Bayraktaroglu L."/>
            <person name="Beasley E.M."/>
            <person name="Beeson K.Y."/>
            <person name="Benos P.V."/>
            <person name="Berman B.P."/>
            <person name="Bhandari D."/>
            <person name="Bolshakov S."/>
            <person name="Borkova D."/>
            <person name="Botchan M.R."/>
            <person name="Bouck J."/>
            <person name="Brokstein P."/>
            <person name="Brottier P."/>
            <person name="Burtis K.C."/>
            <person name="Busam D.A."/>
            <person name="Butler H."/>
            <person name="Cadieu E."/>
            <person name="Center A."/>
            <person name="Chandra I."/>
            <person name="Cherry J.M."/>
            <person name="Cawley S."/>
            <person name="Dahlke C."/>
            <person name="Davenport L.B."/>
            <person name="Davies P."/>
            <person name="de Pablos B."/>
            <person name="Delcher A."/>
            <person name="Deng Z."/>
            <person name="Mays A.D."/>
            <person name="Dew I."/>
            <person name="Dietz S.M."/>
            <person name="Dodson K."/>
            <person name="Doup L.E."/>
            <person name="Downes M."/>
            <person name="Dugan-Rocha S."/>
            <person name="Dunkov B.C."/>
            <person name="Dunn P."/>
            <person name="Durbin K.J."/>
            <person name="Evangelista C.C."/>
            <person name="Ferraz C."/>
            <person name="Ferriera S."/>
            <person name="Fleischmann W."/>
            <person name="Fosler C."/>
            <person name="Gabrielian A.E."/>
            <person name="Garg N.S."/>
            <person name="Gelbart W.M."/>
            <person name="Glasser K."/>
            <person name="Glodek A."/>
            <person name="Gong F."/>
            <person name="Gorrell J.H."/>
            <person name="Gu Z."/>
            <person name="Guan P."/>
            <person name="Harris M."/>
            <person name="Harris N.L."/>
            <person name="Harvey D.A."/>
            <person name="Heiman T.J."/>
            <person name="Hernandez J.R."/>
            <person name="Houck J."/>
            <person name="Hostin D."/>
            <person name="Houston K.A."/>
            <person name="Howland T.J."/>
            <person name="Wei M.-H."/>
            <person name="Ibegwam C."/>
            <person name="Jalali M."/>
            <person name="Kalush F."/>
            <person name="Karpen G.H."/>
            <person name="Ke Z."/>
            <person name="Kennison J.A."/>
            <person name="Ketchum K.A."/>
            <person name="Kimmel B.E."/>
            <person name="Kodira C.D."/>
            <person name="Kraft C.L."/>
            <person name="Kravitz S."/>
            <person name="Kulp D."/>
            <person name="Lai Z."/>
            <person name="Lasko P."/>
            <person name="Lei Y."/>
            <person name="Levitsky A.A."/>
            <person name="Li J.H."/>
            <person name="Li Z."/>
            <person name="Liang Y."/>
            <person name="Lin X."/>
            <person name="Liu X."/>
            <person name="Mattei B."/>
            <person name="McIntosh T.C."/>
            <person name="McLeod M.P."/>
            <person name="McPherson D."/>
            <person name="Merkulov G."/>
            <person name="Milshina N.V."/>
            <person name="Mobarry C."/>
            <person name="Morris J."/>
            <person name="Moshrefi A."/>
            <person name="Mount S.M."/>
            <person name="Moy M."/>
            <person name="Murphy B."/>
            <person name="Murphy L."/>
            <person name="Muzny D.M."/>
            <person name="Nelson D.L."/>
            <person name="Nelson D.R."/>
            <person name="Nelson K.A."/>
            <person name="Nixon K."/>
            <person name="Nusskern D.R."/>
            <person name="Pacleb J.M."/>
            <person name="Palazzolo M."/>
            <person name="Pittman G.S."/>
            <person name="Pan S."/>
            <person name="Pollard J."/>
            <person name="Puri V."/>
            <person name="Reese M.G."/>
            <person name="Reinert K."/>
            <person name="Remington K."/>
            <person name="Saunders R.D.C."/>
            <person name="Scheeler F."/>
            <person name="Shen H."/>
            <person name="Shue B.C."/>
            <person name="Siden-Kiamos I."/>
            <person name="Simpson M."/>
            <person name="Skupski M.P."/>
            <person name="Smith T.J."/>
            <person name="Spier E."/>
            <person name="Spradling A.C."/>
            <person name="Stapleton M."/>
            <person name="Strong R."/>
            <person name="Sun E."/>
            <person name="Svirskas R."/>
            <person name="Tector C."/>
            <person name="Turner R."/>
            <person name="Venter E."/>
            <person name="Wang A.H."/>
            <person name="Wang X."/>
            <person name="Wang Z.-Y."/>
            <person name="Wassarman D.A."/>
            <person name="Weinstock G.M."/>
            <person name="Weissenbach J."/>
            <person name="Williams S.M."/>
            <person name="Woodage T."/>
            <person name="Worley K.C."/>
            <person name="Wu D."/>
            <person name="Yang S."/>
            <person name="Yao Q.A."/>
            <person name="Ye J."/>
            <person name="Yeh R.-F."/>
            <person name="Zaveri J.S."/>
            <person name="Zhan M."/>
            <person name="Zhang G."/>
            <person name="Zhao Q."/>
            <person name="Zheng L."/>
            <person name="Zheng X.H."/>
            <person name="Zhong F.N."/>
            <person name="Zhong W."/>
            <person name="Zhou X."/>
            <person name="Zhu S.C."/>
            <person name="Zhu X."/>
            <person name="Smith H.O."/>
            <person name="Gibbs R.A."/>
            <person name="Myers E.W."/>
            <person name="Rubin G.M."/>
            <person name="Venter J.C."/>
        </authorList>
    </citation>
    <scope>NUCLEOTIDE SEQUENCE [LARGE SCALE GENOMIC DNA]</scope>
    <source>
        <strain>Berkeley</strain>
    </source>
</reference>
<reference key="4">
    <citation type="journal article" date="2002" name="Genome Biol.">
        <title>Annotation of the Drosophila melanogaster euchromatic genome: a systematic review.</title>
        <authorList>
            <person name="Misra S."/>
            <person name="Crosby M.A."/>
            <person name="Mungall C.J."/>
            <person name="Matthews B.B."/>
            <person name="Campbell K.S."/>
            <person name="Hradecky P."/>
            <person name="Huang Y."/>
            <person name="Kaminker J.S."/>
            <person name="Millburn G.H."/>
            <person name="Prochnik S.E."/>
            <person name="Smith C.D."/>
            <person name="Tupy J.L."/>
            <person name="Whitfield E.J."/>
            <person name="Bayraktaroglu L."/>
            <person name="Berman B.P."/>
            <person name="Bettencourt B.R."/>
            <person name="Celniker S.E."/>
            <person name="de Grey A.D.N.J."/>
            <person name="Drysdale R.A."/>
            <person name="Harris N.L."/>
            <person name="Richter J."/>
            <person name="Russo S."/>
            <person name="Schroeder A.J."/>
            <person name="Shu S.Q."/>
            <person name="Stapleton M."/>
            <person name="Yamada C."/>
            <person name="Ashburner M."/>
            <person name="Gelbart W.M."/>
            <person name="Rubin G.M."/>
            <person name="Lewis S.E."/>
        </authorList>
    </citation>
    <scope>GENOME REANNOTATION</scope>
    <source>
        <strain>Berkeley</strain>
    </source>
</reference>
<reference key="5">
    <citation type="submission" date="2003-04" db="EMBL/GenBank/DDBJ databases">
        <authorList>
            <person name="Stapleton M."/>
            <person name="Brokstein P."/>
            <person name="Hong L."/>
            <person name="Agbayani A."/>
            <person name="Carlson J.W."/>
            <person name="Champe M."/>
            <person name="Chavez C."/>
            <person name="Dorsett V."/>
            <person name="Dresnek D."/>
            <person name="Farfan D."/>
            <person name="Frise E."/>
            <person name="George R.A."/>
            <person name="Gonzalez M."/>
            <person name="Guarin H."/>
            <person name="Kronmiller B."/>
            <person name="Li P.W."/>
            <person name="Liao G."/>
            <person name="Miranda A."/>
            <person name="Mungall C.J."/>
            <person name="Nunoo J."/>
            <person name="Pacleb J.M."/>
            <person name="Paragas V."/>
            <person name="Park S."/>
            <person name="Patel S."/>
            <person name="Phouanenavong S."/>
            <person name="Wan K.H."/>
            <person name="Yu C."/>
            <person name="Lewis S.E."/>
            <person name="Rubin G.M."/>
            <person name="Celniker S.E."/>
        </authorList>
    </citation>
    <scope>NUCLEOTIDE SEQUENCE [LARGE SCALE MRNA]</scope>
    <source>
        <strain>Berkeley</strain>
        <tissue>Embryo</tissue>
    </source>
</reference>
<reference key="6">
    <citation type="journal article" date="2008" name="J. Proteome Res.">
        <title>Phosphoproteome analysis of Drosophila melanogaster embryos.</title>
        <authorList>
            <person name="Zhai B."/>
            <person name="Villen J."/>
            <person name="Beausoleil S.A."/>
            <person name="Mintseris J."/>
            <person name="Gygi S.P."/>
        </authorList>
    </citation>
    <scope>PHOSPHORYLATION [LARGE SCALE ANALYSIS] AT SER-44; SER-52 AND SER-58</scope>
    <scope>IDENTIFICATION BY MASS SPECTROMETRY</scope>
    <source>
        <tissue>Embryo</tissue>
    </source>
</reference>
<sequence length="208" mass="22994">MSLSTLLSLVDELQEPRSPIYELGLGLHPHSRYVLPLGTQQRRSINGCPCASPICPSSPAGQVLALRREMANRNDIHWPATAHVGKDGFQVCMDVAQFKPSELNVKVVDDSILVEGKHEERQDDHGHIMRHFVRRYKVPDGYKAEQVVSQLSSDGVLTVSIPKPQAVEDKSKERIIQIQQVGPAHLNVKANESEVKGKENGAPNGKDK</sequence>